<gene>
    <name evidence="1" type="primary">atpH</name>
</gene>
<dbReference type="EMBL" id="Z00018">
    <property type="protein sequence ID" value="CAA77312.1"/>
    <property type="molecule type" value="Genomic_DNA"/>
</dbReference>
<dbReference type="PIR" id="S04671">
    <property type="entry name" value="S04671"/>
</dbReference>
<dbReference type="SMR" id="P05437"/>
<dbReference type="KEGG" id="rbl:B6K69_14535"/>
<dbReference type="OrthoDB" id="9796185at2"/>
<dbReference type="GO" id="GO:0005886">
    <property type="term" value="C:plasma membrane"/>
    <property type="evidence" value="ECO:0007669"/>
    <property type="project" value="UniProtKB-SubCell"/>
</dbReference>
<dbReference type="GO" id="GO:0045259">
    <property type="term" value="C:proton-transporting ATP synthase complex"/>
    <property type="evidence" value="ECO:0007669"/>
    <property type="project" value="UniProtKB-KW"/>
</dbReference>
<dbReference type="GO" id="GO:0046933">
    <property type="term" value="F:proton-transporting ATP synthase activity, rotational mechanism"/>
    <property type="evidence" value="ECO:0007669"/>
    <property type="project" value="UniProtKB-UniRule"/>
</dbReference>
<dbReference type="Gene3D" id="1.10.520.20">
    <property type="entry name" value="N-terminal domain of the delta subunit of the F1F0-ATP synthase"/>
    <property type="match status" value="1"/>
</dbReference>
<dbReference type="HAMAP" id="MF_01416">
    <property type="entry name" value="ATP_synth_delta_bact"/>
    <property type="match status" value="1"/>
</dbReference>
<dbReference type="InterPro" id="IPR026015">
    <property type="entry name" value="ATP_synth_OSCP/delta_N_sf"/>
</dbReference>
<dbReference type="InterPro" id="IPR020781">
    <property type="entry name" value="ATPase_OSCP/d_CS"/>
</dbReference>
<dbReference type="InterPro" id="IPR000711">
    <property type="entry name" value="ATPase_OSCP/dsu"/>
</dbReference>
<dbReference type="NCBIfam" id="TIGR01145">
    <property type="entry name" value="ATP_synt_delta"/>
    <property type="match status" value="1"/>
</dbReference>
<dbReference type="NCBIfam" id="NF004402">
    <property type="entry name" value="PRK05758.2-2"/>
    <property type="match status" value="1"/>
</dbReference>
<dbReference type="NCBIfam" id="NF004406">
    <property type="entry name" value="PRK05758.3-2"/>
    <property type="match status" value="1"/>
</dbReference>
<dbReference type="PANTHER" id="PTHR11910">
    <property type="entry name" value="ATP SYNTHASE DELTA CHAIN"/>
    <property type="match status" value="1"/>
</dbReference>
<dbReference type="Pfam" id="PF00213">
    <property type="entry name" value="OSCP"/>
    <property type="match status" value="1"/>
</dbReference>
<dbReference type="PRINTS" id="PR00125">
    <property type="entry name" value="ATPASEDELTA"/>
</dbReference>
<dbReference type="SUPFAM" id="SSF47928">
    <property type="entry name" value="N-terminal domain of the delta subunit of the F1F0-ATP synthase"/>
    <property type="match status" value="1"/>
</dbReference>
<dbReference type="PROSITE" id="PS00389">
    <property type="entry name" value="ATPASE_DELTA"/>
    <property type="match status" value="1"/>
</dbReference>
<organism>
    <name type="scientific">Fuscovulum blasticum</name>
    <name type="common">Rhodobacter blasticus</name>
    <name type="synonym">Rhodopseudomonas blastica</name>
    <dbReference type="NCBI Taxonomy" id="1075"/>
    <lineage>
        <taxon>Bacteria</taxon>
        <taxon>Pseudomonadati</taxon>
        <taxon>Pseudomonadota</taxon>
        <taxon>Alphaproteobacteria</taxon>
        <taxon>Rhodobacterales</taxon>
        <taxon>Paracoccaceae</taxon>
        <taxon>Pseudogemmobacter</taxon>
    </lineage>
</organism>
<name>ATPD_FUSBL</name>
<accession>P05437</accession>
<reference key="1">
    <citation type="journal article" date="1984" name="J. Mol. Biol.">
        <title>Rhodopseudomonas blastica atp operon. Nucleotide sequence and transcription.</title>
        <authorList>
            <person name="Tybulewicz V.L.J."/>
            <person name="Falk G."/>
            <person name="Walker J.E."/>
        </authorList>
    </citation>
    <scope>NUCLEOTIDE SEQUENCE [GENOMIC DNA]</scope>
</reference>
<comment type="function">
    <text evidence="1">F(1)F(0) ATP synthase produces ATP from ADP in the presence of a proton or sodium gradient. F-type ATPases consist of two structural domains, F(1) containing the extramembraneous catalytic core and F(0) containing the membrane proton channel, linked together by a central stalk and a peripheral stalk. During catalysis, ATP synthesis in the catalytic domain of F(1) is coupled via a rotary mechanism of the central stalk subunits to proton translocation.</text>
</comment>
<comment type="function">
    <text evidence="1">This protein is part of the stalk that links CF(0) to CF(1). It either transmits conformational changes from CF(0) to CF(1) or is implicated in proton conduction.</text>
</comment>
<comment type="subunit">
    <text evidence="1">F-type ATPases have 2 components, F(1) - the catalytic core - and F(0) - the membrane proton channel. F(1) has five subunits: alpha(3), beta(3), gamma(1), delta(1), epsilon(1). F(0) has three main subunits: a(1), b(2) and c(10-14). The alpha and beta chains form an alternating ring which encloses part of the gamma chain. F(1) is attached to F(0) by a central stalk formed by the gamma and epsilon chains, while a peripheral stalk is formed by the delta and b chains.</text>
</comment>
<comment type="subcellular location">
    <subcellularLocation>
        <location evidence="1">Cell inner membrane</location>
        <topology evidence="1">Peripheral membrane protein</topology>
    </subcellularLocation>
</comment>
<comment type="similarity">
    <text evidence="1">Belongs to the ATPase delta chain family.</text>
</comment>
<keyword id="KW-0066">ATP synthesis</keyword>
<keyword id="KW-0997">Cell inner membrane</keyword>
<keyword id="KW-1003">Cell membrane</keyword>
<keyword id="KW-0139">CF(1)</keyword>
<keyword id="KW-0375">Hydrogen ion transport</keyword>
<keyword id="KW-0406">Ion transport</keyword>
<keyword id="KW-0472">Membrane</keyword>
<keyword id="KW-0813">Transport</keyword>
<feature type="chain" id="PRO_0000193475" description="ATP synthase subunit delta">
    <location>
        <begin position="1"/>
        <end position="186"/>
    </location>
</feature>
<protein>
    <recommendedName>
        <fullName evidence="1">ATP synthase subunit delta</fullName>
    </recommendedName>
    <alternativeName>
        <fullName evidence="1">ATP synthase F(1) sector subunit delta</fullName>
    </alternativeName>
    <alternativeName>
        <fullName evidence="1">F-type ATPase subunit delta</fullName>
        <shortName evidence="1">F-ATPase subunit delta</shortName>
    </alternativeName>
</protein>
<proteinExistence type="inferred from homology"/>
<sequence length="186" mass="19156">MAEAASISQGIAERYATALFELSKETGALKTLETDIDALKDVLAGSPDLGAMIASPVISRGDQAKAVAAIAGKMGLSPLMTNTLALMSEKRRLFALPQVLSALAGLIAEEKGEVTAEVTAATKLSAAQAKKLAETLKAKVGKTVKLNTTVDESLIGGLIVKLGSTMIDTSVKSKLASLQNAMKEVG</sequence>
<evidence type="ECO:0000255" key="1">
    <source>
        <dbReference type="HAMAP-Rule" id="MF_01416"/>
    </source>
</evidence>